<evidence type="ECO:0000250" key="1"/>
<evidence type="ECO:0000250" key="2">
    <source>
        <dbReference type="UniProtKB" id="P16284"/>
    </source>
</evidence>
<evidence type="ECO:0000250" key="3">
    <source>
        <dbReference type="UniProtKB" id="P51866"/>
    </source>
</evidence>
<evidence type="ECO:0000250" key="4">
    <source>
        <dbReference type="UniProtKB" id="Q08481"/>
    </source>
</evidence>
<evidence type="ECO:0000255" key="5"/>
<evidence type="ECO:0000255" key="6">
    <source>
        <dbReference type="PROSITE-ProRule" id="PRU00114"/>
    </source>
</evidence>
<evidence type="ECO:0000256" key="7">
    <source>
        <dbReference type="SAM" id="MobiDB-lite"/>
    </source>
</evidence>
<gene>
    <name type="primary">Pecam1</name>
    <name type="synonym">Pecam</name>
</gene>
<keyword id="KW-0130">Cell adhesion</keyword>
<keyword id="KW-0965">Cell junction</keyword>
<keyword id="KW-1003">Cell membrane</keyword>
<keyword id="KW-1015">Disulfide bond</keyword>
<keyword id="KW-0325">Glycoprotein</keyword>
<keyword id="KW-0393">Immunoglobulin domain</keyword>
<keyword id="KW-0472">Membrane</keyword>
<keyword id="KW-0597">Phosphoprotein</keyword>
<keyword id="KW-1185">Reference proteome</keyword>
<keyword id="KW-0677">Repeat</keyword>
<keyword id="KW-0732">Signal</keyword>
<keyword id="KW-0812">Transmembrane</keyword>
<keyword id="KW-1133">Transmembrane helix</keyword>
<accession>Q3SWT0</accession>
<accession>P97635</accession>
<name>PECA1_RAT</name>
<reference key="1">
    <citation type="journal article" date="2004" name="Genome Res.">
        <title>The status, quality, and expansion of the NIH full-length cDNA project: the Mammalian Gene Collection (MGC).</title>
        <authorList>
            <consortium name="The MGC Project Team"/>
        </authorList>
    </citation>
    <scope>NUCLEOTIDE SEQUENCE [LARGE SCALE MRNA]</scope>
    <source>
        <tissue>Spleen</tissue>
    </source>
</reference>
<reference key="2">
    <citation type="journal article" date="2000" name="Dev. Dyn.">
        <title>Regulation of VEGF and VEGF receptor expression in the rodent mammary gland during pregnancy, lactation, and involution.</title>
        <authorList>
            <person name="Pepper M.S."/>
            <person name="Baetens D."/>
            <person name="Mandriota S.J."/>
            <person name="Di Sanza C."/>
            <person name="Oikemus S."/>
            <person name="Lane T.F."/>
            <person name="Soriano J.V."/>
            <person name="Montesano R."/>
            <person name="Iruela-Arispe M.L."/>
        </authorList>
    </citation>
    <scope>NUCLEOTIDE SEQUENCE [MRNA] OF 283-624</scope>
    <source>
        <strain>Sprague-Dawley</strain>
    </source>
</reference>
<reference key="3">
    <citation type="journal article" date="2012" name="Nat. Commun.">
        <title>Quantitative maps of protein phosphorylation sites across 14 different rat organs and tissues.</title>
        <authorList>
            <person name="Lundby A."/>
            <person name="Secher A."/>
            <person name="Lage K."/>
            <person name="Nordsborg N.B."/>
            <person name="Dmytriyev A."/>
            <person name="Lundby C."/>
            <person name="Olsen J.V."/>
        </authorList>
    </citation>
    <scope>IDENTIFICATION BY MASS SPECTROMETRY [LARGE SCALE ANALYSIS]</scope>
</reference>
<comment type="function">
    <text evidence="2 4">Cell adhesion molecule which is required for leukocyte transendothelial migration (TEM) under most inflammatory conditions. Tyr-660 plays a critical role in TEM and is required for efficient trafficking of PECAM1 to and from the lateral border recycling compartment (LBRC) and is also essential for the LBRC membrane to be targeted around migrating leukocytes. Trans-homophilic interaction may play a role in endothelial cell-cell adhesion via cell junctions. Heterophilic interaction with CD177 plays a role in transendothelial migration of neutrophils. Homophilic ligation of PECAM1 prevents macrophage-mediated phagocytosis of neighboring viable leukocytes by transmitting a detachment signal. Promotes macrophage-mediated phagocytosis of apoptotic leukocytes by tethering them to the phagocytic cells; PECAM1-mediated detachment signal appears to be disabled in apoptotic leukocytes. Modulates bradykinin receptor BDKRB2 activation. Regulates bradykinin- and hyperosmotic shock-induced ERK1/2 activation in endothelial cells. Induces susceptibility to atherosclerosis.</text>
</comment>
<comment type="subunit">
    <text evidence="2 3">Trans-homodimer (via Ig-like C2-type 1 and Ig-like C2-type 2 domains); trans-homodimerization is required for cell-cell interaction. Forms a complex with BDKRB2 and GNAQ. Interacts with BDKRB2 and GNAQ. Interacts with PTPN11. Interacts with FER. Interacts with CD177; the interaction is Ca(2+)-dependent; the interaction is direct.</text>
</comment>
<comment type="subcellular location">
    <subcellularLocation>
        <location evidence="2">Cell membrane</location>
        <topology evidence="2">Single-pass type I membrane protein</topology>
    </subcellularLocation>
    <subcellularLocation>
        <location evidence="2">Membrane raft</location>
    </subcellularLocation>
    <subcellularLocation>
        <location evidence="2">Cell junction</location>
    </subcellularLocation>
    <text evidence="2">Localizes to the lateral border recycling compartment (LBRC) and recycles from the LBRC to the junction in resting endothelial cells. Cell surface expression on neutrophils is down-regulated upon fMLP or CXCL8/IL8-mediated stimulation.</text>
</comment>
<comment type="domain">
    <text evidence="1">The Ig-like C2-type domains 2 and 3 contribute to formation of the complex with BDKRB2 and in regulation of its activity.</text>
</comment>
<comment type="PTM">
    <text evidence="2 4">Phosphorylated on Ser and Tyr residues after cellular activation. In endothelial cells Fyn mediates mechanical-force (stretch or pull) induced tyrosine phosphorylation. Phosphorylated on tyrosine residues by FER and FES in response to FCER1 activation.</text>
</comment>
<comment type="PTM">
    <text evidence="2">Palmitoylation by ZDHHC21 is necessary for cell surface expression in endothelial cells and enrichment in membrane rafts.</text>
</comment>
<sequence length="678" mass="76189">MLLALLLTMLLYASLQAQENSFTINSIHMESRPSWEVSNGQKLTLQCLVDISTTSKSRPQHQVLFYKDDALVYNVSSSEHTESFVIPQSRVFHAGKYKCTVILNSKEKTTIEYQLTVNGVPMPEVTVDKKEVTEGGIVTVNCSMQEEKPPIYFKIEKVELGTKNVKLSREKTSNMNFVLIEFPIEEQDHLLVFRCQAGVLSGIKMQTSEFIRSEYVTVQEFFSTPKFQIQPPEMIIEGNQLHIKCSVQVAHLAQEFPEIIIQKDKAIVATSKQSKEAVYSVMALVEHSGHYTCKVESNRISKASSILVNITELFPRPKLELSSSRLDQGEMLDLSCSVSGAPVANFTIQKEETVLSQYQNFSKIAEERDSGLYSCTAGIGKVVKRSNLVPVQVCEMLSKPRIFHDAKFEIIKGQIIGISCQSVNGTAPITYRLLRAKSNFQTVQKNSNDPVTFTDKPTRDMEYQCIVDNCHSHPEVRSEILRVKVIAPVDEVTISILSGNDVQSGDEMVLRCSVKEGTGPVTFQFYKEKEGRPFHEETVNDTQVFWHHEQTSKEQEGQYYCTAFNRASIVTSLRSGPLTVRVFLAPWKKGLIAVVVIGVVIAALIVAAKYYFLRKAKAKQKPVEMSRPAVPLLNSNSEKVSEPSVETNSHYDSQNMDVEYTEVEVSSLEPHQENGRLP</sequence>
<dbReference type="EMBL" id="BC104711">
    <property type="protein sequence ID" value="AAI04712.1"/>
    <property type="molecule type" value="mRNA"/>
</dbReference>
<dbReference type="EMBL" id="U77697">
    <property type="protein sequence ID" value="AAB36541.1"/>
    <property type="molecule type" value="mRNA"/>
</dbReference>
<dbReference type="RefSeq" id="NP_113779.1">
    <property type="nucleotide sequence ID" value="NM_031591.3"/>
</dbReference>
<dbReference type="SMR" id="Q3SWT0"/>
<dbReference type="FunCoup" id="Q3SWT0">
    <property type="interactions" value="641"/>
</dbReference>
<dbReference type="GlyCosmos" id="Q3SWT0">
    <property type="glycosylation" value="7 sites, No reported glycans"/>
</dbReference>
<dbReference type="GlyGen" id="Q3SWT0">
    <property type="glycosylation" value="7 sites"/>
</dbReference>
<dbReference type="iPTMnet" id="Q3SWT0"/>
<dbReference type="PhosphoSitePlus" id="Q3SWT0"/>
<dbReference type="PaxDb" id="10116-ENSRNOP00000044403"/>
<dbReference type="GeneID" id="29583"/>
<dbReference type="KEGG" id="rno:29583"/>
<dbReference type="UCSC" id="RGD:61927">
    <property type="organism name" value="rat"/>
</dbReference>
<dbReference type="AGR" id="RGD:61927"/>
<dbReference type="CTD" id="5175"/>
<dbReference type="RGD" id="61927">
    <property type="gene designation" value="Pecam1"/>
</dbReference>
<dbReference type="eggNOG" id="ENOG502QW63">
    <property type="taxonomic scope" value="Eukaryota"/>
</dbReference>
<dbReference type="InParanoid" id="Q3SWT0"/>
<dbReference type="PhylomeDB" id="Q3SWT0"/>
<dbReference type="Reactome" id="R-RNO-114608">
    <property type="pathway name" value="Platelet degranulation"/>
</dbReference>
<dbReference type="Reactome" id="R-RNO-202733">
    <property type="pathway name" value="Cell surface interactions at the vascular wall"/>
</dbReference>
<dbReference type="Reactome" id="R-RNO-210990">
    <property type="pathway name" value="PECAM1 interactions"/>
</dbReference>
<dbReference type="Reactome" id="R-RNO-216083">
    <property type="pathway name" value="Integrin cell surface interactions"/>
</dbReference>
<dbReference type="Reactome" id="R-RNO-432142">
    <property type="pathway name" value="Platelet sensitization by LDL"/>
</dbReference>
<dbReference type="Reactome" id="R-RNO-6798695">
    <property type="pathway name" value="Neutrophil degranulation"/>
</dbReference>
<dbReference type="PRO" id="PR:Q3SWT0"/>
<dbReference type="Proteomes" id="UP000002494">
    <property type="component" value="Unplaced"/>
</dbReference>
<dbReference type="GO" id="GO:0071944">
    <property type="term" value="C:cell periphery"/>
    <property type="evidence" value="ECO:0000266"/>
    <property type="project" value="RGD"/>
</dbReference>
<dbReference type="GO" id="GO:0009986">
    <property type="term" value="C:cell surface"/>
    <property type="evidence" value="ECO:0000314"/>
    <property type="project" value="RGD"/>
</dbReference>
<dbReference type="GO" id="GO:0044291">
    <property type="term" value="C:cell-cell contact zone"/>
    <property type="evidence" value="ECO:0000266"/>
    <property type="project" value="RGD"/>
</dbReference>
<dbReference type="GO" id="GO:0005911">
    <property type="term" value="C:cell-cell junction"/>
    <property type="evidence" value="ECO:0000266"/>
    <property type="project" value="RGD"/>
</dbReference>
<dbReference type="GO" id="GO:0005737">
    <property type="term" value="C:cytoplasm"/>
    <property type="evidence" value="ECO:0000266"/>
    <property type="project" value="RGD"/>
</dbReference>
<dbReference type="GO" id="GO:0009897">
    <property type="term" value="C:external side of plasma membrane"/>
    <property type="evidence" value="ECO:0000266"/>
    <property type="project" value="RGD"/>
</dbReference>
<dbReference type="GO" id="GO:0005615">
    <property type="term" value="C:extracellular space"/>
    <property type="evidence" value="ECO:0000266"/>
    <property type="project" value="RGD"/>
</dbReference>
<dbReference type="GO" id="GO:0016020">
    <property type="term" value="C:membrane"/>
    <property type="evidence" value="ECO:0000266"/>
    <property type="project" value="RGD"/>
</dbReference>
<dbReference type="GO" id="GO:0045121">
    <property type="term" value="C:membrane raft"/>
    <property type="evidence" value="ECO:0000266"/>
    <property type="project" value="RGD"/>
</dbReference>
<dbReference type="GO" id="GO:0005886">
    <property type="term" value="C:plasma membrane"/>
    <property type="evidence" value="ECO:0000266"/>
    <property type="project" value="RGD"/>
</dbReference>
<dbReference type="GO" id="GO:0032991">
    <property type="term" value="C:protein-containing complex"/>
    <property type="evidence" value="ECO:0000266"/>
    <property type="project" value="RGD"/>
</dbReference>
<dbReference type="GO" id="GO:0001726">
    <property type="term" value="C:ruffle"/>
    <property type="evidence" value="ECO:0000314"/>
    <property type="project" value="RGD"/>
</dbReference>
<dbReference type="GO" id="GO:0030485">
    <property type="term" value="C:smooth muscle contractile fiber"/>
    <property type="evidence" value="ECO:0000266"/>
    <property type="project" value="RGD"/>
</dbReference>
<dbReference type="GO" id="GO:0042803">
    <property type="term" value="F:protein homodimerization activity"/>
    <property type="evidence" value="ECO:0000266"/>
    <property type="project" value="RGD"/>
</dbReference>
<dbReference type="GO" id="GO:0019903">
    <property type="term" value="F:protein phosphatase binding"/>
    <property type="evidence" value="ECO:0000353"/>
    <property type="project" value="RGD"/>
</dbReference>
<dbReference type="GO" id="GO:0004888">
    <property type="term" value="F:transmembrane signaling receptor activity"/>
    <property type="evidence" value="ECO:0000318"/>
    <property type="project" value="GO_Central"/>
</dbReference>
<dbReference type="GO" id="GO:0001525">
    <property type="term" value="P:angiogenesis"/>
    <property type="evidence" value="ECO:0000266"/>
    <property type="project" value="RGD"/>
</dbReference>
<dbReference type="GO" id="GO:0070830">
    <property type="term" value="P:bicellular tight junction assembly"/>
    <property type="evidence" value="ECO:0000266"/>
    <property type="project" value="RGD"/>
</dbReference>
<dbReference type="GO" id="GO:0007155">
    <property type="term" value="P:cell adhesion"/>
    <property type="evidence" value="ECO:0000266"/>
    <property type="project" value="RGD"/>
</dbReference>
<dbReference type="GO" id="GO:0007166">
    <property type="term" value="P:cell surface receptor signaling pathway"/>
    <property type="evidence" value="ECO:0000266"/>
    <property type="project" value="RGD"/>
</dbReference>
<dbReference type="GO" id="GO:0098609">
    <property type="term" value="P:cell-cell adhesion"/>
    <property type="evidence" value="ECO:0000266"/>
    <property type="project" value="RGD"/>
</dbReference>
<dbReference type="GO" id="GO:0098742">
    <property type="term" value="P:cell-cell adhesion via plasma-membrane adhesion molecules"/>
    <property type="evidence" value="ECO:0000266"/>
    <property type="project" value="RGD"/>
</dbReference>
<dbReference type="GO" id="GO:0071260">
    <property type="term" value="P:cellular response to mechanical stimulus"/>
    <property type="evidence" value="ECO:0000266"/>
    <property type="project" value="RGD"/>
</dbReference>
<dbReference type="GO" id="GO:0071560">
    <property type="term" value="P:cellular response to transforming growth factor beta stimulus"/>
    <property type="evidence" value="ECO:0000270"/>
    <property type="project" value="RGD"/>
</dbReference>
<dbReference type="GO" id="GO:0071346">
    <property type="term" value="P:cellular response to type II interferon"/>
    <property type="evidence" value="ECO:0000270"/>
    <property type="project" value="RGD"/>
</dbReference>
<dbReference type="GO" id="GO:0050982">
    <property type="term" value="P:detection of mechanical stimulus"/>
    <property type="evidence" value="ECO:0000266"/>
    <property type="project" value="RGD"/>
</dbReference>
<dbReference type="GO" id="GO:0050904">
    <property type="term" value="P:diapedesis"/>
    <property type="evidence" value="ECO:0000266"/>
    <property type="project" value="RGD"/>
</dbReference>
<dbReference type="GO" id="GO:0043542">
    <property type="term" value="P:endothelial cell migration"/>
    <property type="evidence" value="ECO:0000266"/>
    <property type="project" value="RGD"/>
</dbReference>
<dbReference type="GO" id="GO:0001886">
    <property type="term" value="P:endothelial cell morphogenesis"/>
    <property type="evidence" value="ECO:0000266"/>
    <property type="project" value="RGD"/>
</dbReference>
<dbReference type="GO" id="GO:0090673">
    <property type="term" value="P:endothelial cell-matrix adhesion"/>
    <property type="evidence" value="ECO:0000266"/>
    <property type="project" value="RGD"/>
</dbReference>
<dbReference type="GO" id="GO:0061028">
    <property type="term" value="P:establishment of endothelial barrier"/>
    <property type="evidence" value="ECO:0000266"/>
    <property type="project" value="RGD"/>
</dbReference>
<dbReference type="GO" id="GO:0072011">
    <property type="term" value="P:glomerular endothelium development"/>
    <property type="evidence" value="ECO:0000266"/>
    <property type="project" value="RGD"/>
</dbReference>
<dbReference type="GO" id="GO:0007156">
    <property type="term" value="P:homophilic cell adhesion via plasma membrane adhesion molecules"/>
    <property type="evidence" value="ECO:0000266"/>
    <property type="project" value="RGD"/>
</dbReference>
<dbReference type="GO" id="GO:0006955">
    <property type="term" value="P:immune response"/>
    <property type="evidence" value="ECO:0000318"/>
    <property type="project" value="GO_Central"/>
</dbReference>
<dbReference type="GO" id="GO:0007159">
    <property type="term" value="P:leukocyte cell-cell adhesion"/>
    <property type="evidence" value="ECO:0000266"/>
    <property type="project" value="RGD"/>
</dbReference>
<dbReference type="GO" id="GO:0035696">
    <property type="term" value="P:monocyte extravasation"/>
    <property type="evidence" value="ECO:0000266"/>
    <property type="project" value="RGD"/>
</dbReference>
<dbReference type="GO" id="GO:0030837">
    <property type="term" value="P:negative regulation of actin filament polymerization"/>
    <property type="evidence" value="ECO:0000314"/>
    <property type="project" value="RGD"/>
</dbReference>
<dbReference type="GO" id="GO:0072672">
    <property type="term" value="P:neutrophil extravasation"/>
    <property type="evidence" value="ECO:0000266"/>
    <property type="project" value="RGD"/>
</dbReference>
<dbReference type="GO" id="GO:0006909">
    <property type="term" value="P:phagocytosis"/>
    <property type="evidence" value="ECO:0000266"/>
    <property type="project" value="RGD"/>
</dbReference>
<dbReference type="GO" id="GO:0030335">
    <property type="term" value="P:positive regulation of cell migration"/>
    <property type="evidence" value="ECO:0000266"/>
    <property type="project" value="RGD"/>
</dbReference>
<dbReference type="GO" id="GO:0002693">
    <property type="term" value="P:positive regulation of cellular extravasation"/>
    <property type="evidence" value="ECO:0000315"/>
    <property type="project" value="RGD"/>
</dbReference>
<dbReference type="GO" id="GO:1902533">
    <property type="term" value="P:positive regulation of intracellular signal transduction"/>
    <property type="evidence" value="ECO:0000266"/>
    <property type="project" value="RGD"/>
</dbReference>
<dbReference type="GO" id="GO:0002687">
    <property type="term" value="P:positive regulation of leukocyte migration"/>
    <property type="evidence" value="ECO:0000315"/>
    <property type="project" value="RGD"/>
</dbReference>
<dbReference type="GO" id="GO:0043410">
    <property type="term" value="P:positive regulation of MAPK cascade"/>
    <property type="evidence" value="ECO:0000266"/>
    <property type="project" value="RGD"/>
</dbReference>
<dbReference type="GO" id="GO:0051897">
    <property type="term" value="P:positive regulation of phosphatidylinositol 3-kinase/protein kinase B signal transduction"/>
    <property type="evidence" value="ECO:0000266"/>
    <property type="project" value="RGD"/>
</dbReference>
<dbReference type="GO" id="GO:0150107">
    <property type="term" value="P:positive regulation of protein localization to cell-cell junction"/>
    <property type="evidence" value="ECO:0000266"/>
    <property type="project" value="RGD"/>
</dbReference>
<dbReference type="GO" id="GO:0030334">
    <property type="term" value="P:regulation of cell migration"/>
    <property type="evidence" value="ECO:0000266"/>
    <property type="project" value="RGD"/>
</dbReference>
<dbReference type="GO" id="GO:0007266">
    <property type="term" value="P:Rho protein signal transduction"/>
    <property type="evidence" value="ECO:0000266"/>
    <property type="project" value="RGD"/>
</dbReference>
<dbReference type="GO" id="GO:0042311">
    <property type="term" value="P:vasodilation"/>
    <property type="evidence" value="ECO:0000266"/>
    <property type="project" value="RGD"/>
</dbReference>
<dbReference type="GO" id="GO:0042060">
    <property type="term" value="P:wound healing"/>
    <property type="evidence" value="ECO:0000266"/>
    <property type="project" value="RGD"/>
</dbReference>
<dbReference type="FunFam" id="2.60.40.10:FF:001919">
    <property type="entry name" value="Platelet endothelial cell adhesion molecule"/>
    <property type="match status" value="1"/>
</dbReference>
<dbReference type="Gene3D" id="2.60.40.10">
    <property type="entry name" value="Immunoglobulins"/>
    <property type="match status" value="4"/>
</dbReference>
<dbReference type="InterPro" id="IPR007110">
    <property type="entry name" value="Ig-like_dom"/>
</dbReference>
<dbReference type="InterPro" id="IPR036179">
    <property type="entry name" value="Ig-like_dom_sf"/>
</dbReference>
<dbReference type="InterPro" id="IPR013783">
    <property type="entry name" value="Ig-like_fold"/>
</dbReference>
<dbReference type="InterPro" id="IPR050488">
    <property type="entry name" value="Ig_Fc_receptor"/>
</dbReference>
<dbReference type="InterPro" id="IPR003599">
    <property type="entry name" value="Ig_sub"/>
</dbReference>
<dbReference type="InterPro" id="IPR003598">
    <property type="entry name" value="Ig_sub2"/>
</dbReference>
<dbReference type="InterPro" id="IPR013151">
    <property type="entry name" value="Immunoglobulin_dom"/>
</dbReference>
<dbReference type="PANTHER" id="PTHR11481">
    <property type="entry name" value="IMMUNOGLOBULIN FC RECEPTOR"/>
    <property type="match status" value="1"/>
</dbReference>
<dbReference type="PANTHER" id="PTHR11481:SF5">
    <property type="entry name" value="PLATELET ENDOTHELIAL CELL ADHESION MOLECULE"/>
    <property type="match status" value="1"/>
</dbReference>
<dbReference type="Pfam" id="PF00047">
    <property type="entry name" value="ig"/>
    <property type="match status" value="1"/>
</dbReference>
<dbReference type="Pfam" id="PF13895">
    <property type="entry name" value="Ig_2"/>
    <property type="match status" value="1"/>
</dbReference>
<dbReference type="SMART" id="SM00409">
    <property type="entry name" value="IG"/>
    <property type="match status" value="4"/>
</dbReference>
<dbReference type="SMART" id="SM00408">
    <property type="entry name" value="IGc2"/>
    <property type="match status" value="2"/>
</dbReference>
<dbReference type="SUPFAM" id="SSF48726">
    <property type="entry name" value="Immunoglobulin"/>
    <property type="match status" value="4"/>
</dbReference>
<dbReference type="PROSITE" id="PS50835">
    <property type="entry name" value="IG_LIKE"/>
    <property type="match status" value="4"/>
</dbReference>
<protein>
    <recommendedName>
        <fullName>Platelet endothelial cell adhesion molecule</fullName>
        <shortName>PECAM-1</shortName>
    </recommendedName>
    <cdAntigenName>CD31</cdAntigenName>
</protein>
<organism>
    <name type="scientific">Rattus norvegicus</name>
    <name type="common">Rat</name>
    <dbReference type="NCBI Taxonomy" id="10116"/>
    <lineage>
        <taxon>Eukaryota</taxon>
        <taxon>Metazoa</taxon>
        <taxon>Chordata</taxon>
        <taxon>Craniata</taxon>
        <taxon>Vertebrata</taxon>
        <taxon>Euteleostomi</taxon>
        <taxon>Mammalia</taxon>
        <taxon>Eutheria</taxon>
        <taxon>Euarchontoglires</taxon>
        <taxon>Glires</taxon>
        <taxon>Rodentia</taxon>
        <taxon>Myomorpha</taxon>
        <taxon>Muroidea</taxon>
        <taxon>Muridae</taxon>
        <taxon>Murinae</taxon>
        <taxon>Rattus</taxon>
    </lineage>
</organism>
<feature type="signal peptide" evidence="5">
    <location>
        <begin position="1"/>
        <end position="17"/>
    </location>
</feature>
<feature type="chain" id="PRO_0000045176" description="Platelet endothelial cell adhesion molecule">
    <location>
        <begin position="18"/>
        <end position="678"/>
    </location>
</feature>
<feature type="topological domain" description="Extracellular" evidence="5">
    <location>
        <begin position="18"/>
        <end position="589"/>
    </location>
</feature>
<feature type="transmembrane region" description="Helical" evidence="5">
    <location>
        <begin position="590"/>
        <end position="610"/>
    </location>
</feature>
<feature type="topological domain" description="Cytoplasmic" evidence="5">
    <location>
        <begin position="611"/>
        <end position="678"/>
    </location>
</feature>
<feature type="domain" description="Ig-like C2-type 1">
    <location>
        <begin position="40"/>
        <end position="126"/>
    </location>
</feature>
<feature type="domain" description="Ig-like C2-type 2">
    <location>
        <begin position="135"/>
        <end position="213"/>
    </location>
</feature>
<feature type="domain" description="Ig-like C2-type 3">
    <location>
        <begin position="225"/>
        <end position="309"/>
    </location>
</feature>
<feature type="domain" description="Ig-like C2-type 4">
    <location>
        <begin position="315"/>
        <end position="391"/>
    </location>
</feature>
<feature type="domain" description="Ig-like C2-type 5">
    <location>
        <begin position="413"/>
        <end position="472"/>
    </location>
</feature>
<feature type="domain" description="Ig-like C2-type 6">
    <location>
        <begin position="488"/>
        <end position="577"/>
    </location>
</feature>
<feature type="region of interest" description="Disordered" evidence="7">
    <location>
        <begin position="634"/>
        <end position="653"/>
    </location>
</feature>
<feature type="short sequence motif" description="ITIM motif" evidence="2">
    <location>
        <begin position="658"/>
        <end position="663"/>
    </location>
</feature>
<feature type="modified residue" description="Phosphotyrosine; by FER" evidence="3">
    <location>
        <position position="660"/>
    </location>
</feature>
<feature type="glycosylation site" description="N-linked (GlcNAc...) asparagine" evidence="5">
    <location>
        <position position="74"/>
    </location>
</feature>
<feature type="glycosylation site" description="N-linked (GlcNAc...) asparagine" evidence="5">
    <location>
        <position position="141"/>
    </location>
</feature>
<feature type="glycosylation site" description="N-linked (GlcNAc...) asparagine" evidence="5">
    <location>
        <position position="309"/>
    </location>
</feature>
<feature type="glycosylation site" description="N-linked (GlcNAc...) asparagine" evidence="5">
    <location>
        <position position="345"/>
    </location>
</feature>
<feature type="glycosylation site" description="N-linked (GlcNAc...) asparagine" evidence="5">
    <location>
        <position position="360"/>
    </location>
</feature>
<feature type="glycosylation site" description="N-linked (GlcNAc...) asparagine" evidence="5">
    <location>
        <position position="424"/>
    </location>
</feature>
<feature type="glycosylation site" description="N-linked (GlcNAc...) asparagine" evidence="5">
    <location>
        <position position="540"/>
    </location>
</feature>
<feature type="disulfide bond" evidence="6">
    <location>
        <begin position="47"/>
        <end position="99"/>
    </location>
</feature>
<feature type="disulfide bond" evidence="6">
    <location>
        <begin position="142"/>
        <end position="195"/>
    </location>
</feature>
<feature type="disulfide bond" evidence="6">
    <location>
        <begin position="245"/>
        <end position="293"/>
    </location>
</feature>
<feature type="disulfide bond" evidence="6">
    <location>
        <begin position="336"/>
        <end position="375"/>
    </location>
</feature>
<feature type="disulfide bond" evidence="6">
    <location>
        <begin position="420"/>
        <end position="465"/>
    </location>
</feature>
<feature type="disulfide bond" evidence="6">
    <location>
        <begin position="512"/>
        <end position="561"/>
    </location>
</feature>
<proteinExistence type="evidence at protein level"/>